<keyword id="KW-0030">Aminoacyl-tRNA synthetase</keyword>
<keyword id="KW-0067">ATP-binding</keyword>
<keyword id="KW-0963">Cytoplasm</keyword>
<keyword id="KW-0436">Ligase</keyword>
<keyword id="KW-0479">Metal-binding</keyword>
<keyword id="KW-0547">Nucleotide-binding</keyword>
<keyword id="KW-0648">Protein biosynthesis</keyword>
<keyword id="KW-1185">Reference proteome</keyword>
<keyword id="KW-0862">Zinc</keyword>
<sequence>MIKEITAKYNAEQIEKKVTQFWEDSDAYRKTRERRKTGKRLFFVDGPPYTTGHIHLGTAWNKIIKDTILRYYSMNNRYILERPGWDMHGLPIEVRVEGVLGFKSKKDIESFGVENFIEKCKEFAITQKQAMTEQFQRLGVWMQWPEPYMTLKDDYIEAAWWTLKQAHEKDLLEVGKRSVNWCPRCETAIADSEVEYSERTDPSIYVKFKVKGEENTFIVIWTTTPWTIPANVAVAVHPAYEYSKFRAIRQDGSEEILIAATELIKNVLKQGRYADFKVLETMLGEELTKLEYESPVGDLVPIQNEIKHGVYLADFVTVENTGCVHIAPGHGMDDFNLGVKHKLPILCPVGSNGAYTEEAGEYAGKNVREANPIVIEDLKARNRLLAEGTVTHRYGHCWRCKTPIIYLATEQWFLKITEIKEKMLEEIDAVDWYPDWAGSARFRTWVEGARDWCISRQRYWGIPLPVWKCKKCGKLEVIGTKAELLEKAGLSGDIELHRPYVDRVTVPCECGGEKKRVEDVFDVWFDSAVASWATLKFPQTHDQFDEWWPADFVTEGHDQTRGWFYSQLGASMVGFGRAPYKSVLMHGFTLDAGGKKMSKSLGNVVSPLDIIDRLGADTLRAYVLSSSAPWEDLKYNLEEVETVHRSINILWNVFRFPLPYMALDNFDPMQVSLDSVKDALREEDRWILSRAQSVIKAVNEAMSGYLLHKAVREILEFALEDLSRWYIQLIRPRTWTEADDPDKLAAYCVLYEVYVTITKLISPFMPYLAEEMYQNLIRNVDPNAPESVHMCDWPKVNDTYLDPELEVAMDTVRSIVEAASNARQKAGRKLRWPVSRIIVSPESEAAAKAVNRLGSVLMDQTNSKAIVLTGVGKSWDELGLEVIPDPGKIGPVFKKDAGRVIPALQKVEGFTLKKAFAETGEFELTLADGTTVPVTSGMANFKETLPEGTASAESDAGLVYVDANLTPELEAEGYAREVIRRLQDMRKELDLVVDENIRVSVRIEAEKVLALVETLKDLIAEEVRADVFDLGSSIEVSGTLVKDWDVEGTAMKMGIAKK</sequence>
<evidence type="ECO:0000255" key="1">
    <source>
        <dbReference type="HAMAP-Rule" id="MF_02003"/>
    </source>
</evidence>
<dbReference type="EC" id="6.1.1.5" evidence="1"/>
<dbReference type="EMBL" id="AE010299">
    <property type="protein sequence ID" value="AAM05817.1"/>
    <property type="molecule type" value="Genomic_DNA"/>
</dbReference>
<dbReference type="RefSeq" id="WP_011022402.1">
    <property type="nucleotide sequence ID" value="NC_003552.1"/>
</dbReference>
<dbReference type="SMR" id="Q8TN62"/>
<dbReference type="FunCoup" id="Q8TN62">
    <property type="interactions" value="228"/>
</dbReference>
<dbReference type="STRING" id="188937.MA_2431"/>
<dbReference type="EnsemblBacteria" id="AAM05817">
    <property type="protein sequence ID" value="AAM05817"/>
    <property type="gene ID" value="MA_2431"/>
</dbReference>
<dbReference type="GeneID" id="1474320"/>
<dbReference type="KEGG" id="mac:MA_2431"/>
<dbReference type="HOGENOM" id="CLU_001493_1_1_2"/>
<dbReference type="InParanoid" id="Q8TN62"/>
<dbReference type="OrthoDB" id="30823at2157"/>
<dbReference type="PhylomeDB" id="Q8TN62"/>
<dbReference type="Proteomes" id="UP000002487">
    <property type="component" value="Chromosome"/>
</dbReference>
<dbReference type="GO" id="GO:0005829">
    <property type="term" value="C:cytosol"/>
    <property type="evidence" value="ECO:0000318"/>
    <property type="project" value="GO_Central"/>
</dbReference>
<dbReference type="GO" id="GO:0002161">
    <property type="term" value="F:aminoacyl-tRNA deacylase activity"/>
    <property type="evidence" value="ECO:0007669"/>
    <property type="project" value="InterPro"/>
</dbReference>
<dbReference type="GO" id="GO:0005524">
    <property type="term" value="F:ATP binding"/>
    <property type="evidence" value="ECO:0007669"/>
    <property type="project" value="UniProtKB-UniRule"/>
</dbReference>
<dbReference type="GO" id="GO:0004822">
    <property type="term" value="F:isoleucine-tRNA ligase activity"/>
    <property type="evidence" value="ECO:0000318"/>
    <property type="project" value="GO_Central"/>
</dbReference>
<dbReference type="GO" id="GO:0000049">
    <property type="term" value="F:tRNA binding"/>
    <property type="evidence" value="ECO:0007669"/>
    <property type="project" value="InterPro"/>
</dbReference>
<dbReference type="GO" id="GO:0008270">
    <property type="term" value="F:zinc ion binding"/>
    <property type="evidence" value="ECO:0007669"/>
    <property type="project" value="UniProtKB-UniRule"/>
</dbReference>
<dbReference type="GO" id="GO:0006428">
    <property type="term" value="P:isoleucyl-tRNA aminoacylation"/>
    <property type="evidence" value="ECO:0000318"/>
    <property type="project" value="GO_Central"/>
</dbReference>
<dbReference type="CDD" id="cd07961">
    <property type="entry name" value="Anticodon_Ia_Ile_ABEc"/>
    <property type="match status" value="1"/>
</dbReference>
<dbReference type="CDD" id="cd00818">
    <property type="entry name" value="IleRS_core"/>
    <property type="match status" value="1"/>
</dbReference>
<dbReference type="FunFam" id="3.40.50.620:FF:000286">
    <property type="entry name" value="Isoleucine--tRNA ligase"/>
    <property type="match status" value="1"/>
</dbReference>
<dbReference type="FunFam" id="1.10.730.10:FF:000033">
    <property type="entry name" value="Valine--tRNA ligase"/>
    <property type="match status" value="1"/>
</dbReference>
<dbReference type="Gene3D" id="3.30.720.200">
    <property type="match status" value="1"/>
</dbReference>
<dbReference type="Gene3D" id="3.40.50.620">
    <property type="entry name" value="HUPs"/>
    <property type="match status" value="2"/>
</dbReference>
<dbReference type="Gene3D" id="1.10.730.10">
    <property type="entry name" value="Isoleucyl-tRNA Synthetase, Domain 1"/>
    <property type="match status" value="1"/>
</dbReference>
<dbReference type="HAMAP" id="MF_02003">
    <property type="entry name" value="Ile_tRNA_synth_type2"/>
    <property type="match status" value="1"/>
</dbReference>
<dbReference type="InterPro" id="IPR001412">
    <property type="entry name" value="aa-tRNA-synth_I_CS"/>
</dbReference>
<dbReference type="InterPro" id="IPR002300">
    <property type="entry name" value="aa-tRNA-synth_Ia"/>
</dbReference>
<dbReference type="InterPro" id="IPR033709">
    <property type="entry name" value="Anticodon_Ile_ABEc"/>
</dbReference>
<dbReference type="InterPro" id="IPR002301">
    <property type="entry name" value="Ile-tRNA-ligase"/>
</dbReference>
<dbReference type="InterPro" id="IPR023586">
    <property type="entry name" value="Ile-tRNA-ligase_type2"/>
</dbReference>
<dbReference type="InterPro" id="IPR013155">
    <property type="entry name" value="M/V/L/I-tRNA-synth_anticd-bd"/>
</dbReference>
<dbReference type="InterPro" id="IPR014729">
    <property type="entry name" value="Rossmann-like_a/b/a_fold"/>
</dbReference>
<dbReference type="InterPro" id="IPR009080">
    <property type="entry name" value="tRNAsynth_Ia_anticodon-bd"/>
</dbReference>
<dbReference type="InterPro" id="IPR009008">
    <property type="entry name" value="Val/Leu/Ile-tRNA-synth_edit"/>
</dbReference>
<dbReference type="NCBIfam" id="TIGR00392">
    <property type="entry name" value="ileS"/>
    <property type="match status" value="1"/>
</dbReference>
<dbReference type="PANTHER" id="PTHR42780:SF1">
    <property type="entry name" value="ISOLEUCINE--TRNA LIGASE, CYTOPLASMIC"/>
    <property type="match status" value="1"/>
</dbReference>
<dbReference type="PANTHER" id="PTHR42780">
    <property type="entry name" value="SOLEUCYL-TRNA SYNTHETASE"/>
    <property type="match status" value="1"/>
</dbReference>
<dbReference type="Pfam" id="PF08264">
    <property type="entry name" value="Anticodon_1"/>
    <property type="match status" value="1"/>
</dbReference>
<dbReference type="Pfam" id="PF19302">
    <property type="entry name" value="DUF5915"/>
    <property type="match status" value="1"/>
</dbReference>
<dbReference type="Pfam" id="PF00133">
    <property type="entry name" value="tRNA-synt_1"/>
    <property type="match status" value="1"/>
</dbReference>
<dbReference type="PRINTS" id="PR00984">
    <property type="entry name" value="TRNASYNTHILE"/>
</dbReference>
<dbReference type="SUPFAM" id="SSF47323">
    <property type="entry name" value="Anticodon-binding domain of a subclass of class I aminoacyl-tRNA synthetases"/>
    <property type="match status" value="1"/>
</dbReference>
<dbReference type="SUPFAM" id="SSF52374">
    <property type="entry name" value="Nucleotidylyl transferase"/>
    <property type="match status" value="1"/>
</dbReference>
<dbReference type="SUPFAM" id="SSF50677">
    <property type="entry name" value="ValRS/IleRS/LeuRS editing domain"/>
    <property type="match status" value="1"/>
</dbReference>
<dbReference type="PROSITE" id="PS00178">
    <property type="entry name" value="AA_TRNA_LIGASE_I"/>
    <property type="match status" value="1"/>
</dbReference>
<gene>
    <name evidence="1" type="primary">ileS</name>
    <name type="ordered locus">MA_2431</name>
</gene>
<name>SYI_METAC</name>
<accession>Q8TN62</accession>
<proteinExistence type="inferred from homology"/>
<feature type="chain" id="PRO_0000098583" description="Isoleucine--tRNA ligase">
    <location>
        <begin position="1"/>
        <end position="1058"/>
    </location>
</feature>
<feature type="short sequence motif" description="'HIGH' region">
    <location>
        <begin position="48"/>
        <end position="58"/>
    </location>
</feature>
<feature type="short sequence motif" description="'KMSKS' region">
    <location>
        <begin position="596"/>
        <end position="600"/>
    </location>
</feature>
<feature type="binding site" evidence="1">
    <location>
        <position position="599"/>
    </location>
    <ligand>
        <name>ATP</name>
        <dbReference type="ChEBI" id="CHEBI:30616"/>
    </ligand>
</feature>
<organism>
    <name type="scientific">Methanosarcina acetivorans (strain ATCC 35395 / DSM 2834 / JCM 12185 / C2A)</name>
    <dbReference type="NCBI Taxonomy" id="188937"/>
    <lineage>
        <taxon>Archaea</taxon>
        <taxon>Methanobacteriati</taxon>
        <taxon>Methanobacteriota</taxon>
        <taxon>Stenosarchaea group</taxon>
        <taxon>Methanomicrobia</taxon>
        <taxon>Methanosarcinales</taxon>
        <taxon>Methanosarcinaceae</taxon>
        <taxon>Methanosarcina</taxon>
    </lineage>
</organism>
<protein>
    <recommendedName>
        <fullName evidence="1">Isoleucine--tRNA ligase</fullName>
        <ecNumber evidence="1">6.1.1.5</ecNumber>
    </recommendedName>
    <alternativeName>
        <fullName evidence="1">Isoleucyl-tRNA synthetase</fullName>
        <shortName evidence="1">IleRS</shortName>
    </alternativeName>
</protein>
<comment type="function">
    <text evidence="1">Catalyzes the attachment of isoleucine to tRNA(Ile). As IleRS can inadvertently accommodate and process structurally similar amino acids such as valine, to avoid such errors it has two additional distinct tRNA(Ile)-dependent editing activities. One activity is designated as 'pretransfer' editing and involves the hydrolysis of activated Val-AMP. The other activity is designated 'posttransfer' editing and involves deacylation of mischarged Val-tRNA(Ile).</text>
</comment>
<comment type="catalytic activity">
    <reaction evidence="1">
        <text>tRNA(Ile) + L-isoleucine + ATP = L-isoleucyl-tRNA(Ile) + AMP + diphosphate</text>
        <dbReference type="Rhea" id="RHEA:11060"/>
        <dbReference type="Rhea" id="RHEA-COMP:9666"/>
        <dbReference type="Rhea" id="RHEA-COMP:9695"/>
        <dbReference type="ChEBI" id="CHEBI:30616"/>
        <dbReference type="ChEBI" id="CHEBI:33019"/>
        <dbReference type="ChEBI" id="CHEBI:58045"/>
        <dbReference type="ChEBI" id="CHEBI:78442"/>
        <dbReference type="ChEBI" id="CHEBI:78528"/>
        <dbReference type="ChEBI" id="CHEBI:456215"/>
        <dbReference type="EC" id="6.1.1.5"/>
    </reaction>
</comment>
<comment type="cofactor">
    <cofactor evidence="1">
        <name>Zn(2+)</name>
        <dbReference type="ChEBI" id="CHEBI:29105"/>
    </cofactor>
</comment>
<comment type="subunit">
    <text evidence="1">Monomer.</text>
</comment>
<comment type="subcellular location">
    <subcellularLocation>
        <location evidence="1">Cytoplasm</location>
    </subcellularLocation>
</comment>
<comment type="domain">
    <text evidence="1">IleRS has two distinct active sites: one for aminoacylation and one for editing. The misactivated valine is translocated from the active site to the editing site, which sterically excludes the correctly activated isoleucine. The single editing site contains two valyl binding pockets, one specific for each substrate (Val-AMP or Val-tRNA(Ile)).</text>
</comment>
<comment type="similarity">
    <text evidence="1">Belongs to the class-I aminoacyl-tRNA synthetase family. IleS type 2 subfamily.</text>
</comment>
<reference key="1">
    <citation type="journal article" date="2002" name="Genome Res.">
        <title>The genome of Methanosarcina acetivorans reveals extensive metabolic and physiological diversity.</title>
        <authorList>
            <person name="Galagan J.E."/>
            <person name="Nusbaum C."/>
            <person name="Roy A."/>
            <person name="Endrizzi M.G."/>
            <person name="Macdonald P."/>
            <person name="FitzHugh W."/>
            <person name="Calvo S."/>
            <person name="Engels R."/>
            <person name="Smirnov S."/>
            <person name="Atnoor D."/>
            <person name="Brown A."/>
            <person name="Allen N."/>
            <person name="Naylor J."/>
            <person name="Stange-Thomann N."/>
            <person name="DeArellano K."/>
            <person name="Johnson R."/>
            <person name="Linton L."/>
            <person name="McEwan P."/>
            <person name="McKernan K."/>
            <person name="Talamas J."/>
            <person name="Tirrell A."/>
            <person name="Ye W."/>
            <person name="Zimmer A."/>
            <person name="Barber R.D."/>
            <person name="Cann I."/>
            <person name="Graham D.E."/>
            <person name="Grahame D.A."/>
            <person name="Guss A.M."/>
            <person name="Hedderich R."/>
            <person name="Ingram-Smith C."/>
            <person name="Kuettner H.C."/>
            <person name="Krzycki J.A."/>
            <person name="Leigh J.A."/>
            <person name="Li W."/>
            <person name="Liu J."/>
            <person name="Mukhopadhyay B."/>
            <person name="Reeve J.N."/>
            <person name="Smith K."/>
            <person name="Springer T.A."/>
            <person name="Umayam L.A."/>
            <person name="White O."/>
            <person name="White R.H."/>
            <person name="de Macario E.C."/>
            <person name="Ferry J.G."/>
            <person name="Jarrell K.F."/>
            <person name="Jing H."/>
            <person name="Macario A.J.L."/>
            <person name="Paulsen I.T."/>
            <person name="Pritchett M."/>
            <person name="Sowers K.R."/>
            <person name="Swanson R.V."/>
            <person name="Zinder S.H."/>
            <person name="Lander E."/>
            <person name="Metcalf W.W."/>
            <person name="Birren B."/>
        </authorList>
    </citation>
    <scope>NUCLEOTIDE SEQUENCE [LARGE SCALE GENOMIC DNA]</scope>
    <source>
        <strain>ATCC 35395 / DSM 2834 / JCM 12185 / C2A</strain>
    </source>
</reference>